<name>NTF3_XENUN</name>
<sequence>IQSTSMDQGSLSEDSMNSFIRTFIQAGIWKNKVPKQAARTKDGTQTTAKKTEAEPEATANKDFQLGFQPVVSVDAELLRQQRRFSSPRVLLSENTPLEPPPLYLMEEPMVLNRTSRRKRFAEGKSHRGEYSVCDSESRWVTDKSSAVDIRGHQVTVLGEIRMGPS</sequence>
<keyword id="KW-0165">Cleavage on pair of basic residues</keyword>
<keyword id="KW-0325">Glycoprotein</keyword>
<keyword id="KW-0339">Growth factor</keyword>
<keyword id="KW-0964">Secreted</keyword>
<keyword id="KW-0732">Signal</keyword>
<gene>
    <name type="primary">NTF3</name>
</gene>
<organism>
    <name type="scientific">Xenopeltis unicolor</name>
    <name type="common">Sunbeam snake</name>
    <dbReference type="NCBI Taxonomy" id="196253"/>
    <lineage>
        <taxon>Eukaryota</taxon>
        <taxon>Metazoa</taxon>
        <taxon>Chordata</taxon>
        <taxon>Craniata</taxon>
        <taxon>Vertebrata</taxon>
        <taxon>Euteleostomi</taxon>
        <taxon>Lepidosauria</taxon>
        <taxon>Squamata</taxon>
        <taxon>Bifurcata</taxon>
        <taxon>Unidentata</taxon>
        <taxon>Episquamata</taxon>
        <taxon>Toxicofera</taxon>
        <taxon>Serpentes</taxon>
        <taxon>Henophidia</taxon>
        <taxon>Xenopeltidae</taxon>
        <taxon>Xenopeltis</taxon>
    </lineage>
</organism>
<accession>Q1KN19</accession>
<proteinExistence type="inferred from homology"/>
<evidence type="ECO:0000250" key="1"/>
<evidence type="ECO:0000255" key="2"/>
<evidence type="ECO:0000256" key="3">
    <source>
        <dbReference type="SAM" id="MobiDB-lite"/>
    </source>
</evidence>
<evidence type="ECO:0000305" key="4"/>
<reference key="1">
    <citation type="journal article" date="2006" name="Mol. Phylogenet. Evol.">
        <title>Dispersal and vicariance: the complex evolutionary history of boid snakes.</title>
        <authorList>
            <person name="Noonan B.P."/>
            <person name="Chippindale P.T."/>
        </authorList>
    </citation>
    <scope>NUCLEOTIDE SEQUENCE [GENOMIC DNA]</scope>
</reference>
<comment type="function">
    <text evidence="1">Seems to promote the survival of visceral and proprioceptive sensory neurons.</text>
</comment>
<comment type="subcellular location">
    <subcellularLocation>
        <location evidence="1">Secreted</location>
    </subcellularLocation>
</comment>
<comment type="similarity">
    <text evidence="4">Belongs to the NGF-beta family.</text>
</comment>
<dbReference type="EMBL" id="DQ465562">
    <property type="protein sequence ID" value="ABE76336.1"/>
    <property type="molecule type" value="Genomic_DNA"/>
</dbReference>
<dbReference type="SMR" id="Q1KN19"/>
<dbReference type="GlyCosmos" id="Q1KN19">
    <property type="glycosylation" value="1 site, No reported glycans"/>
</dbReference>
<dbReference type="GO" id="GO:0030424">
    <property type="term" value="C:axon"/>
    <property type="evidence" value="ECO:0007669"/>
    <property type="project" value="TreeGrafter"/>
</dbReference>
<dbReference type="GO" id="GO:0030425">
    <property type="term" value="C:dendrite"/>
    <property type="evidence" value="ECO:0007669"/>
    <property type="project" value="TreeGrafter"/>
</dbReference>
<dbReference type="GO" id="GO:0005615">
    <property type="term" value="C:extracellular space"/>
    <property type="evidence" value="ECO:0007669"/>
    <property type="project" value="TreeGrafter"/>
</dbReference>
<dbReference type="GO" id="GO:0008021">
    <property type="term" value="C:synaptic vesicle"/>
    <property type="evidence" value="ECO:0007669"/>
    <property type="project" value="TreeGrafter"/>
</dbReference>
<dbReference type="GO" id="GO:0008083">
    <property type="term" value="F:growth factor activity"/>
    <property type="evidence" value="ECO:0007669"/>
    <property type="project" value="UniProtKB-KW"/>
</dbReference>
<dbReference type="GO" id="GO:0005163">
    <property type="term" value="F:nerve growth factor receptor binding"/>
    <property type="evidence" value="ECO:0007669"/>
    <property type="project" value="TreeGrafter"/>
</dbReference>
<dbReference type="GO" id="GO:0007169">
    <property type="term" value="P:cell surface receptor protein tyrosine kinase signaling pathway"/>
    <property type="evidence" value="ECO:0007669"/>
    <property type="project" value="TreeGrafter"/>
</dbReference>
<dbReference type="GO" id="GO:0050804">
    <property type="term" value="P:modulation of chemical synaptic transmission"/>
    <property type="evidence" value="ECO:0007669"/>
    <property type="project" value="TreeGrafter"/>
</dbReference>
<dbReference type="GO" id="GO:0043524">
    <property type="term" value="P:negative regulation of neuron apoptotic process"/>
    <property type="evidence" value="ECO:0007669"/>
    <property type="project" value="TreeGrafter"/>
</dbReference>
<dbReference type="GO" id="GO:0021675">
    <property type="term" value="P:nerve development"/>
    <property type="evidence" value="ECO:0007669"/>
    <property type="project" value="TreeGrafter"/>
</dbReference>
<dbReference type="GO" id="GO:0038180">
    <property type="term" value="P:nerve growth factor signaling pathway"/>
    <property type="evidence" value="ECO:0007669"/>
    <property type="project" value="TreeGrafter"/>
</dbReference>
<dbReference type="GO" id="GO:0048812">
    <property type="term" value="P:neuron projection morphogenesis"/>
    <property type="evidence" value="ECO:0007669"/>
    <property type="project" value="TreeGrafter"/>
</dbReference>
<dbReference type="Gene3D" id="2.10.90.10">
    <property type="entry name" value="Cystine-knot cytokines"/>
    <property type="match status" value="1"/>
</dbReference>
<dbReference type="InterPro" id="IPR029034">
    <property type="entry name" value="Cystine-knot_cytokine"/>
</dbReference>
<dbReference type="InterPro" id="IPR020408">
    <property type="entry name" value="Nerve_growth_factor-like"/>
</dbReference>
<dbReference type="InterPro" id="IPR002072">
    <property type="entry name" value="Nerve_growth_factor-rel"/>
</dbReference>
<dbReference type="InterPro" id="IPR045815">
    <property type="entry name" value="NTF3_N"/>
</dbReference>
<dbReference type="PANTHER" id="PTHR11589">
    <property type="entry name" value="NERVE GROWTH FACTOR NGF -RELATED"/>
    <property type="match status" value="1"/>
</dbReference>
<dbReference type="PANTHER" id="PTHR11589:SF4">
    <property type="entry name" value="NEUROTROPHIN-3"/>
    <property type="match status" value="1"/>
</dbReference>
<dbReference type="Pfam" id="PF00243">
    <property type="entry name" value="NGF"/>
    <property type="match status" value="1"/>
</dbReference>
<dbReference type="Pfam" id="PF19338">
    <property type="entry name" value="NTF3_N"/>
    <property type="match status" value="1"/>
</dbReference>
<dbReference type="PIRSF" id="PIRSF001789">
    <property type="entry name" value="NGF"/>
    <property type="match status" value="1"/>
</dbReference>
<dbReference type="SMART" id="SM00140">
    <property type="entry name" value="NGF"/>
    <property type="match status" value="1"/>
</dbReference>
<dbReference type="SUPFAM" id="SSF57501">
    <property type="entry name" value="Cystine-knot cytokines"/>
    <property type="match status" value="1"/>
</dbReference>
<dbReference type="PROSITE" id="PS50270">
    <property type="entry name" value="NGF_2"/>
    <property type="match status" value="1"/>
</dbReference>
<feature type="signal peptide" evidence="2">
    <location>
        <begin position="1" status="less than"/>
        <end position="3"/>
    </location>
</feature>
<feature type="propeptide" id="PRO_0000346749" evidence="1">
    <location>
        <begin position="4"/>
        <end position="119"/>
    </location>
</feature>
<feature type="chain" id="PRO_0000346750" description="Neurotrophin-3">
    <location>
        <begin position="120"/>
        <end position="165" status="greater than"/>
    </location>
</feature>
<feature type="region of interest" description="Disordered" evidence="3">
    <location>
        <begin position="32"/>
        <end position="61"/>
    </location>
</feature>
<feature type="glycosylation site" description="N-linked (GlcNAc...) asparagine" evidence="2">
    <location>
        <position position="112"/>
    </location>
</feature>
<feature type="non-terminal residue">
    <location>
        <position position="1"/>
    </location>
</feature>
<feature type="non-terminal residue">
    <location>
        <position position="165"/>
    </location>
</feature>
<protein>
    <recommendedName>
        <fullName>Neurotrophin-3</fullName>
        <shortName>NT-3</shortName>
    </recommendedName>
</protein>